<gene>
    <name evidence="1" type="primary">glmU</name>
    <name type="ordered locus">XCV3762</name>
</gene>
<sequence length="454" mass="48013">MTLPLHVVILAAGEGKRMRSSLPKVLQPLAGQPMLAHVIATARQLQPAAIHIVYGHGGDQVQAAFADQGDLQWAEQCEQLGTGHAVQQAMPAIPDAATVLVLYGDVPLIRSESLLQLLHAPGRMAVLVAELANPTGYGRILRDAEGKVAAIVEQKDANDEQRRIRTINTGILTAESTALRRWLAGLSKDNAQGEFYLTDVFASAAADFTPADMVHVADPQHVEGANDPWQLAQLERAWQLRAARTLCLQGVRMADPARVEQRGSVQVGRDVQLDIDVILEGNVTLGDDVVIGPFVRLRDVTLGAGTHVRAHSDLEGVVTEGAVQIGPFARLRPGTVLADGVHIGNFVETKKVTMGVGSKANHLTYLGDAVIGSKVNIGAGTITCNYDGVNKSQTTIGDGAFVGSNSALVAPIEIGANSTIGAGSVITSDAPAGQLSVTRARQTVIEGWKRPTKK</sequence>
<accession>Q3BP20</accession>
<reference key="1">
    <citation type="journal article" date="2005" name="J. Bacteriol.">
        <title>Insights into genome plasticity and pathogenicity of the plant pathogenic Bacterium Xanthomonas campestris pv. vesicatoria revealed by the complete genome sequence.</title>
        <authorList>
            <person name="Thieme F."/>
            <person name="Koebnik R."/>
            <person name="Bekel T."/>
            <person name="Berger C."/>
            <person name="Boch J."/>
            <person name="Buettner D."/>
            <person name="Caldana C."/>
            <person name="Gaigalat L."/>
            <person name="Goesmann A."/>
            <person name="Kay S."/>
            <person name="Kirchner O."/>
            <person name="Lanz C."/>
            <person name="Linke B."/>
            <person name="McHardy A.C."/>
            <person name="Meyer F."/>
            <person name="Mittenhuber G."/>
            <person name="Nies D.H."/>
            <person name="Niesbach-Kloesgen U."/>
            <person name="Patschkowski T."/>
            <person name="Rueckert C."/>
            <person name="Rupp O."/>
            <person name="Schneiker S."/>
            <person name="Schuster S.C."/>
            <person name="Vorhoelter F.J."/>
            <person name="Weber E."/>
            <person name="Puehler A."/>
            <person name="Bonas U."/>
            <person name="Bartels D."/>
            <person name="Kaiser O."/>
        </authorList>
    </citation>
    <scope>NUCLEOTIDE SEQUENCE [LARGE SCALE GENOMIC DNA]</scope>
    <source>
        <strain>85-10</strain>
    </source>
</reference>
<name>GLMU_XANE5</name>
<feature type="chain" id="PRO_0000233884" description="Bifunctional protein GlmU">
    <location>
        <begin position="1"/>
        <end position="454"/>
    </location>
</feature>
<feature type="region of interest" description="Pyrophosphorylase" evidence="1">
    <location>
        <begin position="1"/>
        <end position="228"/>
    </location>
</feature>
<feature type="region of interest" description="Linker" evidence="1">
    <location>
        <begin position="229"/>
        <end position="249"/>
    </location>
</feature>
<feature type="region of interest" description="N-acetyltransferase" evidence="1">
    <location>
        <begin position="250"/>
        <end position="454"/>
    </location>
</feature>
<feature type="active site" description="Proton acceptor" evidence="1">
    <location>
        <position position="362"/>
    </location>
</feature>
<feature type="binding site" evidence="1">
    <location>
        <begin position="10"/>
        <end position="13"/>
    </location>
    <ligand>
        <name>UDP-N-acetyl-alpha-D-glucosamine</name>
        <dbReference type="ChEBI" id="CHEBI:57705"/>
    </ligand>
</feature>
<feature type="binding site" evidence="1">
    <location>
        <position position="24"/>
    </location>
    <ligand>
        <name>UDP-N-acetyl-alpha-D-glucosamine</name>
        <dbReference type="ChEBI" id="CHEBI:57705"/>
    </ligand>
</feature>
<feature type="binding site" evidence="1">
    <location>
        <position position="76"/>
    </location>
    <ligand>
        <name>UDP-N-acetyl-alpha-D-glucosamine</name>
        <dbReference type="ChEBI" id="CHEBI:57705"/>
    </ligand>
</feature>
<feature type="binding site" evidence="1">
    <location>
        <begin position="81"/>
        <end position="82"/>
    </location>
    <ligand>
        <name>UDP-N-acetyl-alpha-D-glucosamine</name>
        <dbReference type="ChEBI" id="CHEBI:57705"/>
    </ligand>
</feature>
<feature type="binding site" evidence="1">
    <location>
        <begin position="103"/>
        <end position="105"/>
    </location>
    <ligand>
        <name>UDP-N-acetyl-alpha-D-glucosamine</name>
        <dbReference type="ChEBI" id="CHEBI:57705"/>
    </ligand>
</feature>
<feature type="binding site" evidence="1">
    <location>
        <position position="105"/>
    </location>
    <ligand>
        <name>Mg(2+)</name>
        <dbReference type="ChEBI" id="CHEBI:18420"/>
    </ligand>
</feature>
<feature type="binding site" evidence="1">
    <location>
        <position position="138"/>
    </location>
    <ligand>
        <name>UDP-N-acetyl-alpha-D-glucosamine</name>
        <dbReference type="ChEBI" id="CHEBI:57705"/>
    </ligand>
</feature>
<feature type="binding site" evidence="1">
    <location>
        <position position="153"/>
    </location>
    <ligand>
        <name>UDP-N-acetyl-alpha-D-glucosamine</name>
        <dbReference type="ChEBI" id="CHEBI:57705"/>
    </ligand>
</feature>
<feature type="binding site" evidence="1">
    <location>
        <position position="168"/>
    </location>
    <ligand>
        <name>UDP-N-acetyl-alpha-D-glucosamine</name>
        <dbReference type="ChEBI" id="CHEBI:57705"/>
    </ligand>
</feature>
<feature type="binding site" evidence="1">
    <location>
        <position position="226"/>
    </location>
    <ligand>
        <name>Mg(2+)</name>
        <dbReference type="ChEBI" id="CHEBI:18420"/>
    </ligand>
</feature>
<feature type="binding site" evidence="1">
    <location>
        <position position="226"/>
    </location>
    <ligand>
        <name>UDP-N-acetyl-alpha-D-glucosamine</name>
        <dbReference type="ChEBI" id="CHEBI:57705"/>
    </ligand>
</feature>
<feature type="binding site" evidence="1">
    <location>
        <position position="332"/>
    </location>
    <ligand>
        <name>UDP-N-acetyl-alpha-D-glucosamine</name>
        <dbReference type="ChEBI" id="CHEBI:57705"/>
    </ligand>
</feature>
<feature type="binding site" evidence="1">
    <location>
        <position position="350"/>
    </location>
    <ligand>
        <name>UDP-N-acetyl-alpha-D-glucosamine</name>
        <dbReference type="ChEBI" id="CHEBI:57705"/>
    </ligand>
</feature>
<feature type="binding site" evidence="1">
    <location>
        <position position="365"/>
    </location>
    <ligand>
        <name>UDP-N-acetyl-alpha-D-glucosamine</name>
        <dbReference type="ChEBI" id="CHEBI:57705"/>
    </ligand>
</feature>
<feature type="binding site" evidence="1">
    <location>
        <position position="376"/>
    </location>
    <ligand>
        <name>UDP-N-acetyl-alpha-D-glucosamine</name>
        <dbReference type="ChEBI" id="CHEBI:57705"/>
    </ligand>
</feature>
<feature type="binding site" evidence="1">
    <location>
        <position position="379"/>
    </location>
    <ligand>
        <name>acetyl-CoA</name>
        <dbReference type="ChEBI" id="CHEBI:57288"/>
    </ligand>
</feature>
<feature type="binding site" evidence="1">
    <location>
        <begin position="385"/>
        <end position="386"/>
    </location>
    <ligand>
        <name>acetyl-CoA</name>
        <dbReference type="ChEBI" id="CHEBI:57288"/>
    </ligand>
</feature>
<feature type="binding site" evidence="1">
    <location>
        <position position="404"/>
    </location>
    <ligand>
        <name>acetyl-CoA</name>
        <dbReference type="ChEBI" id="CHEBI:57288"/>
    </ligand>
</feature>
<feature type="binding site" evidence="1">
    <location>
        <position position="422"/>
    </location>
    <ligand>
        <name>acetyl-CoA</name>
        <dbReference type="ChEBI" id="CHEBI:57288"/>
    </ligand>
</feature>
<feature type="binding site" evidence="1">
    <location>
        <position position="439"/>
    </location>
    <ligand>
        <name>acetyl-CoA</name>
        <dbReference type="ChEBI" id="CHEBI:57288"/>
    </ligand>
</feature>
<evidence type="ECO:0000255" key="1">
    <source>
        <dbReference type="HAMAP-Rule" id="MF_01631"/>
    </source>
</evidence>
<organism>
    <name type="scientific">Xanthomonas euvesicatoria pv. vesicatoria (strain 85-10)</name>
    <name type="common">Xanthomonas campestris pv. vesicatoria</name>
    <dbReference type="NCBI Taxonomy" id="316273"/>
    <lineage>
        <taxon>Bacteria</taxon>
        <taxon>Pseudomonadati</taxon>
        <taxon>Pseudomonadota</taxon>
        <taxon>Gammaproteobacteria</taxon>
        <taxon>Lysobacterales</taxon>
        <taxon>Lysobacteraceae</taxon>
        <taxon>Xanthomonas</taxon>
    </lineage>
</organism>
<protein>
    <recommendedName>
        <fullName evidence="1">Bifunctional protein GlmU</fullName>
    </recommendedName>
    <domain>
        <recommendedName>
            <fullName evidence="1">UDP-N-acetylglucosamine pyrophosphorylase</fullName>
            <ecNumber evidence="1">2.7.7.23</ecNumber>
        </recommendedName>
        <alternativeName>
            <fullName evidence="1">N-acetylglucosamine-1-phosphate uridyltransferase</fullName>
        </alternativeName>
    </domain>
    <domain>
        <recommendedName>
            <fullName evidence="1">Glucosamine-1-phosphate N-acetyltransferase</fullName>
            <ecNumber evidence="1">2.3.1.157</ecNumber>
        </recommendedName>
    </domain>
</protein>
<keyword id="KW-0012">Acyltransferase</keyword>
<keyword id="KW-0133">Cell shape</keyword>
<keyword id="KW-0961">Cell wall biogenesis/degradation</keyword>
<keyword id="KW-0963">Cytoplasm</keyword>
<keyword id="KW-0460">Magnesium</keyword>
<keyword id="KW-0479">Metal-binding</keyword>
<keyword id="KW-0511">Multifunctional enzyme</keyword>
<keyword id="KW-0548">Nucleotidyltransferase</keyword>
<keyword id="KW-0573">Peptidoglycan synthesis</keyword>
<keyword id="KW-0677">Repeat</keyword>
<keyword id="KW-0808">Transferase</keyword>
<proteinExistence type="inferred from homology"/>
<dbReference type="EC" id="2.7.7.23" evidence="1"/>
<dbReference type="EC" id="2.3.1.157" evidence="1"/>
<dbReference type="EMBL" id="AM039952">
    <property type="protein sequence ID" value="CAJ25493.1"/>
    <property type="molecule type" value="Genomic_DNA"/>
</dbReference>
<dbReference type="RefSeq" id="WP_011348654.1">
    <property type="nucleotide sequence ID" value="NZ_CP017190.1"/>
</dbReference>
<dbReference type="SMR" id="Q3BP20"/>
<dbReference type="STRING" id="456327.BJD11_03850"/>
<dbReference type="KEGG" id="xcv:XCV3762"/>
<dbReference type="eggNOG" id="COG1207">
    <property type="taxonomic scope" value="Bacteria"/>
</dbReference>
<dbReference type="HOGENOM" id="CLU_029499_15_2_6"/>
<dbReference type="UniPathway" id="UPA00113">
    <property type="reaction ID" value="UER00532"/>
</dbReference>
<dbReference type="UniPathway" id="UPA00113">
    <property type="reaction ID" value="UER00533"/>
</dbReference>
<dbReference type="UniPathway" id="UPA00973"/>
<dbReference type="Proteomes" id="UP000007069">
    <property type="component" value="Chromosome"/>
</dbReference>
<dbReference type="GO" id="GO:0005737">
    <property type="term" value="C:cytoplasm"/>
    <property type="evidence" value="ECO:0007669"/>
    <property type="project" value="UniProtKB-SubCell"/>
</dbReference>
<dbReference type="GO" id="GO:0016020">
    <property type="term" value="C:membrane"/>
    <property type="evidence" value="ECO:0007669"/>
    <property type="project" value="GOC"/>
</dbReference>
<dbReference type="GO" id="GO:0019134">
    <property type="term" value="F:glucosamine-1-phosphate N-acetyltransferase activity"/>
    <property type="evidence" value="ECO:0007669"/>
    <property type="project" value="UniProtKB-UniRule"/>
</dbReference>
<dbReference type="GO" id="GO:0000287">
    <property type="term" value="F:magnesium ion binding"/>
    <property type="evidence" value="ECO:0007669"/>
    <property type="project" value="UniProtKB-UniRule"/>
</dbReference>
<dbReference type="GO" id="GO:0003977">
    <property type="term" value="F:UDP-N-acetylglucosamine diphosphorylase activity"/>
    <property type="evidence" value="ECO:0007669"/>
    <property type="project" value="UniProtKB-UniRule"/>
</dbReference>
<dbReference type="GO" id="GO:0000902">
    <property type="term" value="P:cell morphogenesis"/>
    <property type="evidence" value="ECO:0007669"/>
    <property type="project" value="UniProtKB-UniRule"/>
</dbReference>
<dbReference type="GO" id="GO:0071555">
    <property type="term" value="P:cell wall organization"/>
    <property type="evidence" value="ECO:0007669"/>
    <property type="project" value="UniProtKB-KW"/>
</dbReference>
<dbReference type="GO" id="GO:0009245">
    <property type="term" value="P:lipid A biosynthetic process"/>
    <property type="evidence" value="ECO:0007669"/>
    <property type="project" value="UniProtKB-UniRule"/>
</dbReference>
<dbReference type="GO" id="GO:0009252">
    <property type="term" value="P:peptidoglycan biosynthetic process"/>
    <property type="evidence" value="ECO:0007669"/>
    <property type="project" value="UniProtKB-UniRule"/>
</dbReference>
<dbReference type="GO" id="GO:0008360">
    <property type="term" value="P:regulation of cell shape"/>
    <property type="evidence" value="ECO:0007669"/>
    <property type="project" value="UniProtKB-KW"/>
</dbReference>
<dbReference type="GO" id="GO:0006048">
    <property type="term" value="P:UDP-N-acetylglucosamine biosynthetic process"/>
    <property type="evidence" value="ECO:0007669"/>
    <property type="project" value="UniProtKB-UniPathway"/>
</dbReference>
<dbReference type="CDD" id="cd02540">
    <property type="entry name" value="GT2_GlmU_N_bac"/>
    <property type="match status" value="1"/>
</dbReference>
<dbReference type="CDD" id="cd03353">
    <property type="entry name" value="LbH_GlmU_C"/>
    <property type="match status" value="1"/>
</dbReference>
<dbReference type="Gene3D" id="2.160.10.10">
    <property type="entry name" value="Hexapeptide repeat proteins"/>
    <property type="match status" value="1"/>
</dbReference>
<dbReference type="Gene3D" id="3.90.550.10">
    <property type="entry name" value="Spore Coat Polysaccharide Biosynthesis Protein SpsA, Chain A"/>
    <property type="match status" value="1"/>
</dbReference>
<dbReference type="HAMAP" id="MF_01631">
    <property type="entry name" value="GlmU"/>
    <property type="match status" value="1"/>
</dbReference>
<dbReference type="InterPro" id="IPR005882">
    <property type="entry name" value="Bifunctional_GlmU"/>
</dbReference>
<dbReference type="InterPro" id="IPR050065">
    <property type="entry name" value="GlmU-like"/>
</dbReference>
<dbReference type="InterPro" id="IPR038009">
    <property type="entry name" value="GlmU_C_LbH"/>
</dbReference>
<dbReference type="InterPro" id="IPR001451">
    <property type="entry name" value="Hexapep"/>
</dbReference>
<dbReference type="InterPro" id="IPR018357">
    <property type="entry name" value="Hexapep_transf_CS"/>
</dbReference>
<dbReference type="InterPro" id="IPR025877">
    <property type="entry name" value="MobA-like_NTP_Trfase"/>
</dbReference>
<dbReference type="InterPro" id="IPR029044">
    <property type="entry name" value="Nucleotide-diphossugar_trans"/>
</dbReference>
<dbReference type="InterPro" id="IPR011004">
    <property type="entry name" value="Trimer_LpxA-like_sf"/>
</dbReference>
<dbReference type="NCBIfam" id="TIGR01173">
    <property type="entry name" value="glmU"/>
    <property type="match status" value="1"/>
</dbReference>
<dbReference type="PANTHER" id="PTHR43584:SF3">
    <property type="entry name" value="BIFUNCTIONAL PROTEIN GLMU"/>
    <property type="match status" value="1"/>
</dbReference>
<dbReference type="PANTHER" id="PTHR43584">
    <property type="entry name" value="NUCLEOTIDYL TRANSFERASE"/>
    <property type="match status" value="1"/>
</dbReference>
<dbReference type="Pfam" id="PF00132">
    <property type="entry name" value="Hexapep"/>
    <property type="match status" value="2"/>
</dbReference>
<dbReference type="Pfam" id="PF12804">
    <property type="entry name" value="NTP_transf_3"/>
    <property type="match status" value="1"/>
</dbReference>
<dbReference type="SUPFAM" id="SSF53448">
    <property type="entry name" value="Nucleotide-diphospho-sugar transferases"/>
    <property type="match status" value="1"/>
</dbReference>
<dbReference type="SUPFAM" id="SSF51161">
    <property type="entry name" value="Trimeric LpxA-like enzymes"/>
    <property type="match status" value="1"/>
</dbReference>
<dbReference type="PROSITE" id="PS00101">
    <property type="entry name" value="HEXAPEP_TRANSFERASES"/>
    <property type="match status" value="1"/>
</dbReference>
<comment type="function">
    <text evidence="1">Catalyzes the last two sequential reactions in the de novo biosynthetic pathway for UDP-N-acetylglucosamine (UDP-GlcNAc). The C-terminal domain catalyzes the transfer of acetyl group from acetyl coenzyme A to glucosamine-1-phosphate (GlcN-1-P) to produce N-acetylglucosamine-1-phosphate (GlcNAc-1-P), which is converted into UDP-GlcNAc by the transfer of uridine 5-monophosphate (from uridine 5-triphosphate), a reaction catalyzed by the N-terminal domain.</text>
</comment>
<comment type="catalytic activity">
    <reaction evidence="1">
        <text>alpha-D-glucosamine 1-phosphate + acetyl-CoA = N-acetyl-alpha-D-glucosamine 1-phosphate + CoA + H(+)</text>
        <dbReference type="Rhea" id="RHEA:13725"/>
        <dbReference type="ChEBI" id="CHEBI:15378"/>
        <dbReference type="ChEBI" id="CHEBI:57287"/>
        <dbReference type="ChEBI" id="CHEBI:57288"/>
        <dbReference type="ChEBI" id="CHEBI:57776"/>
        <dbReference type="ChEBI" id="CHEBI:58516"/>
        <dbReference type="EC" id="2.3.1.157"/>
    </reaction>
</comment>
<comment type="catalytic activity">
    <reaction evidence="1">
        <text>N-acetyl-alpha-D-glucosamine 1-phosphate + UTP + H(+) = UDP-N-acetyl-alpha-D-glucosamine + diphosphate</text>
        <dbReference type="Rhea" id="RHEA:13509"/>
        <dbReference type="ChEBI" id="CHEBI:15378"/>
        <dbReference type="ChEBI" id="CHEBI:33019"/>
        <dbReference type="ChEBI" id="CHEBI:46398"/>
        <dbReference type="ChEBI" id="CHEBI:57705"/>
        <dbReference type="ChEBI" id="CHEBI:57776"/>
        <dbReference type="EC" id="2.7.7.23"/>
    </reaction>
</comment>
<comment type="cofactor">
    <cofactor evidence="1">
        <name>Mg(2+)</name>
        <dbReference type="ChEBI" id="CHEBI:18420"/>
    </cofactor>
    <text evidence="1">Binds 1 Mg(2+) ion per subunit.</text>
</comment>
<comment type="pathway">
    <text evidence="1">Nucleotide-sugar biosynthesis; UDP-N-acetyl-alpha-D-glucosamine biosynthesis; N-acetyl-alpha-D-glucosamine 1-phosphate from alpha-D-glucosamine 6-phosphate (route II): step 2/2.</text>
</comment>
<comment type="pathway">
    <text evidence="1">Nucleotide-sugar biosynthesis; UDP-N-acetyl-alpha-D-glucosamine biosynthesis; UDP-N-acetyl-alpha-D-glucosamine from N-acetyl-alpha-D-glucosamine 1-phosphate: step 1/1.</text>
</comment>
<comment type="pathway">
    <text evidence="1">Bacterial outer membrane biogenesis; LPS lipid A biosynthesis.</text>
</comment>
<comment type="subunit">
    <text evidence="1">Homotrimer.</text>
</comment>
<comment type="subcellular location">
    <subcellularLocation>
        <location evidence="1">Cytoplasm</location>
    </subcellularLocation>
</comment>
<comment type="similarity">
    <text evidence="1">In the N-terminal section; belongs to the N-acetylglucosamine-1-phosphate uridyltransferase family.</text>
</comment>
<comment type="similarity">
    <text evidence="1">In the C-terminal section; belongs to the transferase hexapeptide repeat family.</text>
</comment>